<feature type="propeptide" id="PRO_0000372483" description="Leader peptide; cleaved by LepB" evidence="1">
    <location>
        <begin position="1"/>
        <end position="51"/>
    </location>
</feature>
<feature type="chain" id="PRO_0000372484" description="Pilin">
    <location>
        <begin position="52"/>
        <end position="121"/>
    </location>
</feature>
<feature type="topological domain" description="Periplasmic" evidence="1">
    <location>
        <begin position="1"/>
        <end position="75"/>
    </location>
</feature>
<feature type="transmembrane region" description="Helical" evidence="2">
    <location>
        <begin position="76"/>
        <end position="96"/>
    </location>
</feature>
<feature type="topological domain" description="Cytoplasmic" evidence="1">
    <location>
        <begin position="97"/>
        <end position="100"/>
    </location>
</feature>
<feature type="transmembrane region" description="Helical" evidence="2">
    <location>
        <begin position="101"/>
        <end position="121"/>
    </location>
</feature>
<feature type="modified residue" description="N-acetylalanine" evidence="1">
    <location>
        <position position="52"/>
    </location>
</feature>
<organism>
    <name type="scientific">Escherichia coli</name>
    <dbReference type="NCBI Taxonomy" id="562"/>
    <lineage>
        <taxon>Bacteria</taxon>
        <taxon>Pseudomonadati</taxon>
        <taxon>Pseudomonadota</taxon>
        <taxon>Gammaproteobacteria</taxon>
        <taxon>Enterobacterales</taxon>
        <taxon>Enterobacteriaceae</taxon>
        <taxon>Escherichia</taxon>
    </lineage>
</organism>
<sequence>MDAVLSVQGVSAPVKKKSFFSKFTRLNMLRLARAVIPAAVLMMFFPQLAMAAGSSGQDLMASGNTTVKATFGKDSSVVKWVVLAEVLVGAVMYMMTKNVKFLAGFAIISVFIAVGMAVVGL</sequence>
<protein>
    <recommendedName>
        <fullName>Pilin</fullName>
    </recommendedName>
</protein>
<keyword id="KW-0007">Acetylation</keyword>
<keyword id="KW-0997">Cell inner membrane</keyword>
<keyword id="KW-1003">Cell membrane</keyword>
<keyword id="KW-0184">Conjugation</keyword>
<keyword id="KW-0472">Membrane</keyword>
<keyword id="KW-0614">Plasmid</keyword>
<keyword id="KW-0964">Secreted</keyword>
<keyword id="KW-0812">Transmembrane</keyword>
<keyword id="KW-1133">Transmembrane helix</keyword>
<reference key="1">
    <citation type="journal article" date="2008" name="Antimicrob. Agents Chemother.">
        <title>Sequence of conjugative plasmid pIP1206 mediating resistance to aminoglycosides by 16S rRNA methylation and to hydrophilic fluoroquinolones by efflux.</title>
        <authorList>
            <person name="Perichon B."/>
            <person name="Bogaerts P."/>
            <person name="Lambert T."/>
            <person name="Frangeul L."/>
            <person name="Courvalin P."/>
            <person name="Galimand M."/>
        </authorList>
    </citation>
    <scope>NUCLEOTIDE SEQUENCE [GENOMIC DNA]</scope>
</reference>
<name>PIL2_ECOLX</name>
<geneLocation type="plasmid">
    <name>pIP1206</name>
</geneLocation>
<comment type="function">
    <text evidence="1">Propilin is the precursor of the pilus subunit, pilin, that forms conjugative pili, the filamentous surface appendages required for cell-to-cell contact during the earlier stages of bacterial conjugation, and that retract after contact is established. Mature pilin is assembled with the help of TraQ and TraX (By similarity).</text>
</comment>
<comment type="subunit">
    <text evidence="1">Monomer. Interacts with itself to form filaments; also interacts with TraQ (By similarity).</text>
</comment>
<comment type="subcellular location">
    <subcellularLocation>
        <location>Cell inner membrane</location>
        <topology>Multi-pass membrane protein</topology>
    </subcellularLocation>
    <subcellularLocation>
        <location evidence="1">Secreted</location>
    </subcellularLocation>
    <text evidence="1">Propilin is directed to the inner membrane, where it is cleaved and acetylated. Mature pilin forms filaments that are secreted to form the conjugative pilus (By similarity).</text>
</comment>
<comment type="similarity">
    <text evidence="3">Belongs to the TraA family.</text>
</comment>
<dbReference type="EMBL" id="AM886293">
    <property type="protein sequence ID" value="CAP07708.1"/>
    <property type="molecule type" value="Genomic_DNA"/>
</dbReference>
<dbReference type="RefSeq" id="WP_000340282.1">
    <property type="nucleotide sequence ID" value="NZ_WVUZ01000023.1"/>
</dbReference>
<dbReference type="RefSeq" id="YP_001816522.1">
    <property type="nucleotide sequence ID" value="NC_010558.1"/>
</dbReference>
<dbReference type="EMDB" id="EMD-4044"/>
<dbReference type="EMDB" id="EMD-4046"/>
<dbReference type="SMR" id="B1VC86"/>
<dbReference type="GO" id="GO:0005576">
    <property type="term" value="C:extracellular region"/>
    <property type="evidence" value="ECO:0007669"/>
    <property type="project" value="UniProtKB-SubCell"/>
</dbReference>
<dbReference type="GO" id="GO:0005886">
    <property type="term" value="C:plasma membrane"/>
    <property type="evidence" value="ECO:0007669"/>
    <property type="project" value="UniProtKB-SubCell"/>
</dbReference>
<dbReference type="InterPro" id="IPR008873">
    <property type="entry name" value="TraA"/>
</dbReference>
<dbReference type="NCBIfam" id="NF010294">
    <property type="entry name" value="PRK13734.1"/>
    <property type="match status" value="1"/>
</dbReference>
<dbReference type="NCBIfam" id="TIGR02758">
    <property type="entry name" value="TraA_TIGR"/>
    <property type="match status" value="1"/>
</dbReference>
<dbReference type="Pfam" id="PF05513">
    <property type="entry name" value="TraA"/>
    <property type="match status" value="1"/>
</dbReference>
<accession>B1VC86</accession>
<evidence type="ECO:0000250" key="1"/>
<evidence type="ECO:0000255" key="2"/>
<evidence type="ECO:0000305" key="3"/>
<gene>
    <name type="primary">traA</name>
    <name type="ORF">IPF_325</name>
</gene>
<proteinExistence type="inferred from homology"/>